<evidence type="ECO:0000255" key="1">
    <source>
        <dbReference type="HAMAP-Rule" id="MF_01849"/>
    </source>
</evidence>
<evidence type="ECO:0000255" key="2">
    <source>
        <dbReference type="PROSITE-ProRule" id="PRU01266"/>
    </source>
</evidence>
<evidence type="ECO:0000305" key="3"/>
<dbReference type="EC" id="2.1.1.192" evidence="1"/>
<dbReference type="EMBL" id="CP000304">
    <property type="protein sequence ID" value="ABP80675.1"/>
    <property type="status" value="ALT_INIT"/>
    <property type="molecule type" value="Genomic_DNA"/>
</dbReference>
<dbReference type="RefSeq" id="WP_041755642.1">
    <property type="nucleotide sequence ID" value="NC_009434.1"/>
</dbReference>
<dbReference type="SMR" id="A4VNX4"/>
<dbReference type="KEGG" id="psa:PST_3034"/>
<dbReference type="eggNOG" id="COG0820">
    <property type="taxonomic scope" value="Bacteria"/>
</dbReference>
<dbReference type="HOGENOM" id="CLU_029101_0_0_6"/>
<dbReference type="Proteomes" id="UP000000233">
    <property type="component" value="Chromosome"/>
</dbReference>
<dbReference type="GO" id="GO:0005737">
    <property type="term" value="C:cytoplasm"/>
    <property type="evidence" value="ECO:0007669"/>
    <property type="project" value="UniProtKB-SubCell"/>
</dbReference>
<dbReference type="GO" id="GO:0051539">
    <property type="term" value="F:4 iron, 4 sulfur cluster binding"/>
    <property type="evidence" value="ECO:0007669"/>
    <property type="project" value="UniProtKB-UniRule"/>
</dbReference>
<dbReference type="GO" id="GO:0046872">
    <property type="term" value="F:metal ion binding"/>
    <property type="evidence" value="ECO:0007669"/>
    <property type="project" value="UniProtKB-KW"/>
</dbReference>
<dbReference type="GO" id="GO:0070040">
    <property type="term" value="F:rRNA (adenine(2503)-C2-)-methyltransferase activity"/>
    <property type="evidence" value="ECO:0007669"/>
    <property type="project" value="UniProtKB-UniRule"/>
</dbReference>
<dbReference type="GO" id="GO:0019843">
    <property type="term" value="F:rRNA binding"/>
    <property type="evidence" value="ECO:0007669"/>
    <property type="project" value="UniProtKB-UniRule"/>
</dbReference>
<dbReference type="GO" id="GO:0002935">
    <property type="term" value="F:tRNA (adenine(37)-C2)-methyltransferase activity"/>
    <property type="evidence" value="ECO:0007669"/>
    <property type="project" value="UniProtKB-UniRule"/>
</dbReference>
<dbReference type="GO" id="GO:0000049">
    <property type="term" value="F:tRNA binding"/>
    <property type="evidence" value="ECO:0007669"/>
    <property type="project" value="UniProtKB-UniRule"/>
</dbReference>
<dbReference type="GO" id="GO:0070475">
    <property type="term" value="P:rRNA base methylation"/>
    <property type="evidence" value="ECO:0007669"/>
    <property type="project" value="UniProtKB-UniRule"/>
</dbReference>
<dbReference type="GO" id="GO:0030488">
    <property type="term" value="P:tRNA methylation"/>
    <property type="evidence" value="ECO:0007669"/>
    <property type="project" value="UniProtKB-UniRule"/>
</dbReference>
<dbReference type="CDD" id="cd01335">
    <property type="entry name" value="Radical_SAM"/>
    <property type="match status" value="1"/>
</dbReference>
<dbReference type="FunFam" id="1.10.150.530:FF:000003">
    <property type="entry name" value="Dual-specificity RNA methyltransferase RlmN"/>
    <property type="match status" value="1"/>
</dbReference>
<dbReference type="FunFam" id="3.20.20.70:FF:000008">
    <property type="entry name" value="Dual-specificity RNA methyltransferase RlmN"/>
    <property type="match status" value="1"/>
</dbReference>
<dbReference type="Gene3D" id="1.10.150.530">
    <property type="match status" value="1"/>
</dbReference>
<dbReference type="Gene3D" id="3.20.20.70">
    <property type="entry name" value="Aldolase class I"/>
    <property type="match status" value="1"/>
</dbReference>
<dbReference type="HAMAP" id="MF_01849">
    <property type="entry name" value="RNA_methyltr_RlmN"/>
    <property type="match status" value="1"/>
</dbReference>
<dbReference type="InterPro" id="IPR013785">
    <property type="entry name" value="Aldolase_TIM"/>
</dbReference>
<dbReference type="InterPro" id="IPR040072">
    <property type="entry name" value="Methyltransferase_A"/>
</dbReference>
<dbReference type="InterPro" id="IPR048641">
    <property type="entry name" value="RlmN_N"/>
</dbReference>
<dbReference type="InterPro" id="IPR027492">
    <property type="entry name" value="RNA_MTrfase_RlmN"/>
</dbReference>
<dbReference type="InterPro" id="IPR004383">
    <property type="entry name" value="rRNA_lsu_MTrfase_RlmN/Cfr"/>
</dbReference>
<dbReference type="InterPro" id="IPR007197">
    <property type="entry name" value="rSAM"/>
</dbReference>
<dbReference type="NCBIfam" id="TIGR00048">
    <property type="entry name" value="rRNA_mod_RlmN"/>
    <property type="match status" value="1"/>
</dbReference>
<dbReference type="PANTHER" id="PTHR30544">
    <property type="entry name" value="23S RRNA METHYLTRANSFERASE"/>
    <property type="match status" value="1"/>
</dbReference>
<dbReference type="PANTHER" id="PTHR30544:SF5">
    <property type="entry name" value="RADICAL SAM CORE DOMAIN-CONTAINING PROTEIN"/>
    <property type="match status" value="1"/>
</dbReference>
<dbReference type="Pfam" id="PF04055">
    <property type="entry name" value="Radical_SAM"/>
    <property type="match status" value="1"/>
</dbReference>
<dbReference type="Pfam" id="PF21016">
    <property type="entry name" value="RlmN_N"/>
    <property type="match status" value="1"/>
</dbReference>
<dbReference type="PIRSF" id="PIRSF006004">
    <property type="entry name" value="CHP00048"/>
    <property type="match status" value="1"/>
</dbReference>
<dbReference type="SFLD" id="SFLDF00275">
    <property type="entry name" value="adenosine_C2_methyltransferase"/>
    <property type="match status" value="1"/>
</dbReference>
<dbReference type="SFLD" id="SFLDG01062">
    <property type="entry name" value="methyltransferase_(Class_A)"/>
    <property type="match status" value="1"/>
</dbReference>
<dbReference type="SUPFAM" id="SSF102114">
    <property type="entry name" value="Radical SAM enzymes"/>
    <property type="match status" value="1"/>
</dbReference>
<dbReference type="PROSITE" id="PS51918">
    <property type="entry name" value="RADICAL_SAM"/>
    <property type="match status" value="1"/>
</dbReference>
<comment type="function">
    <text evidence="1">Specifically methylates position 2 of adenine 2503 in 23S rRNA and position 2 of adenine 37 in tRNAs. m2A2503 modification seems to play a crucial role in the proofreading step occurring at the peptidyl transferase center and thus would serve to optimize ribosomal fidelity.</text>
</comment>
<comment type="catalytic activity">
    <reaction evidence="1">
        <text>adenosine(2503) in 23S rRNA + 2 reduced [2Fe-2S]-[ferredoxin] + 2 S-adenosyl-L-methionine = 2-methyladenosine(2503) in 23S rRNA + 5'-deoxyadenosine + L-methionine + 2 oxidized [2Fe-2S]-[ferredoxin] + S-adenosyl-L-homocysteine</text>
        <dbReference type="Rhea" id="RHEA:42916"/>
        <dbReference type="Rhea" id="RHEA-COMP:10000"/>
        <dbReference type="Rhea" id="RHEA-COMP:10001"/>
        <dbReference type="Rhea" id="RHEA-COMP:10152"/>
        <dbReference type="Rhea" id="RHEA-COMP:10282"/>
        <dbReference type="ChEBI" id="CHEBI:17319"/>
        <dbReference type="ChEBI" id="CHEBI:33737"/>
        <dbReference type="ChEBI" id="CHEBI:33738"/>
        <dbReference type="ChEBI" id="CHEBI:57844"/>
        <dbReference type="ChEBI" id="CHEBI:57856"/>
        <dbReference type="ChEBI" id="CHEBI:59789"/>
        <dbReference type="ChEBI" id="CHEBI:74411"/>
        <dbReference type="ChEBI" id="CHEBI:74497"/>
        <dbReference type="EC" id="2.1.1.192"/>
    </reaction>
</comment>
<comment type="catalytic activity">
    <reaction evidence="1">
        <text>adenosine(37) in tRNA + 2 reduced [2Fe-2S]-[ferredoxin] + 2 S-adenosyl-L-methionine = 2-methyladenosine(37) in tRNA + 5'-deoxyadenosine + L-methionine + 2 oxidized [2Fe-2S]-[ferredoxin] + S-adenosyl-L-homocysteine</text>
        <dbReference type="Rhea" id="RHEA:43332"/>
        <dbReference type="Rhea" id="RHEA-COMP:10000"/>
        <dbReference type="Rhea" id="RHEA-COMP:10001"/>
        <dbReference type="Rhea" id="RHEA-COMP:10162"/>
        <dbReference type="Rhea" id="RHEA-COMP:10485"/>
        <dbReference type="ChEBI" id="CHEBI:17319"/>
        <dbReference type="ChEBI" id="CHEBI:33737"/>
        <dbReference type="ChEBI" id="CHEBI:33738"/>
        <dbReference type="ChEBI" id="CHEBI:57844"/>
        <dbReference type="ChEBI" id="CHEBI:57856"/>
        <dbReference type="ChEBI" id="CHEBI:59789"/>
        <dbReference type="ChEBI" id="CHEBI:74411"/>
        <dbReference type="ChEBI" id="CHEBI:74497"/>
        <dbReference type="EC" id="2.1.1.192"/>
    </reaction>
</comment>
<comment type="cofactor">
    <cofactor evidence="1">
        <name>[4Fe-4S] cluster</name>
        <dbReference type="ChEBI" id="CHEBI:49883"/>
    </cofactor>
    <text evidence="1">Binds 1 [4Fe-4S] cluster. The cluster is coordinated with 3 cysteines and an exchangeable S-adenosyl-L-methionine.</text>
</comment>
<comment type="subcellular location">
    <subcellularLocation>
        <location evidence="1">Cytoplasm</location>
    </subcellularLocation>
</comment>
<comment type="miscellaneous">
    <text evidence="1">Reaction proceeds by a ping-pong mechanism involving intermediate methylation of a conserved cysteine residue.</text>
</comment>
<comment type="similarity">
    <text evidence="1">Belongs to the radical SAM superfamily. RlmN family.</text>
</comment>
<comment type="sequence caution" evidence="3">
    <conflict type="erroneous initiation">
        <sequence resource="EMBL-CDS" id="ABP80675"/>
    </conflict>
</comment>
<accession>A4VNX4</accession>
<feature type="chain" id="PRO_0000350345" description="Dual-specificity RNA methyltransferase RlmN">
    <location>
        <begin position="1"/>
        <end position="382"/>
    </location>
</feature>
<feature type="domain" description="Radical SAM core" evidence="2">
    <location>
        <begin position="102"/>
        <end position="342"/>
    </location>
</feature>
<feature type="active site" description="Proton acceptor" evidence="1">
    <location>
        <position position="96"/>
    </location>
</feature>
<feature type="active site" description="S-methylcysteine intermediate" evidence="1">
    <location>
        <position position="345"/>
    </location>
</feature>
<feature type="binding site" evidence="1">
    <location>
        <position position="116"/>
    </location>
    <ligand>
        <name>[4Fe-4S] cluster</name>
        <dbReference type="ChEBI" id="CHEBI:49883"/>
        <note>4Fe-4S-S-AdoMet</note>
    </ligand>
</feature>
<feature type="binding site" evidence="1">
    <location>
        <position position="120"/>
    </location>
    <ligand>
        <name>[4Fe-4S] cluster</name>
        <dbReference type="ChEBI" id="CHEBI:49883"/>
        <note>4Fe-4S-S-AdoMet</note>
    </ligand>
</feature>
<feature type="binding site" evidence="1">
    <location>
        <position position="123"/>
    </location>
    <ligand>
        <name>[4Fe-4S] cluster</name>
        <dbReference type="ChEBI" id="CHEBI:49883"/>
        <note>4Fe-4S-S-AdoMet</note>
    </ligand>
</feature>
<feature type="binding site" evidence="1">
    <location>
        <begin position="170"/>
        <end position="171"/>
    </location>
    <ligand>
        <name>S-adenosyl-L-methionine</name>
        <dbReference type="ChEBI" id="CHEBI:59789"/>
    </ligand>
</feature>
<feature type="binding site" evidence="1">
    <location>
        <position position="202"/>
    </location>
    <ligand>
        <name>S-adenosyl-L-methionine</name>
        <dbReference type="ChEBI" id="CHEBI:59789"/>
    </ligand>
</feature>
<feature type="binding site" evidence="1">
    <location>
        <begin position="224"/>
        <end position="226"/>
    </location>
    <ligand>
        <name>S-adenosyl-L-methionine</name>
        <dbReference type="ChEBI" id="CHEBI:59789"/>
    </ligand>
</feature>
<feature type="binding site" evidence="1">
    <location>
        <position position="302"/>
    </location>
    <ligand>
        <name>S-adenosyl-L-methionine</name>
        <dbReference type="ChEBI" id="CHEBI:59789"/>
    </ligand>
</feature>
<feature type="disulfide bond" description="(transient)" evidence="1">
    <location>
        <begin position="109"/>
        <end position="345"/>
    </location>
</feature>
<gene>
    <name evidence="1" type="primary">rlmN</name>
    <name type="ordered locus">PST_3034</name>
</gene>
<reference key="1">
    <citation type="journal article" date="2008" name="Proc. Natl. Acad. Sci. U.S.A.">
        <title>Nitrogen fixation island and rhizosphere competence traits in the genome of root-associated Pseudomonas stutzeri A1501.</title>
        <authorList>
            <person name="Yan Y."/>
            <person name="Yang J."/>
            <person name="Dou Y."/>
            <person name="Chen M."/>
            <person name="Ping S."/>
            <person name="Peng J."/>
            <person name="Lu W."/>
            <person name="Zhang W."/>
            <person name="Yao Z."/>
            <person name="Li H."/>
            <person name="Liu W."/>
            <person name="He S."/>
            <person name="Geng L."/>
            <person name="Zhang X."/>
            <person name="Yang F."/>
            <person name="Yu H."/>
            <person name="Zhan Y."/>
            <person name="Li D."/>
            <person name="Lin Z."/>
            <person name="Wang Y."/>
            <person name="Elmerich C."/>
            <person name="Lin M."/>
            <person name="Jin Q."/>
        </authorList>
    </citation>
    <scope>NUCLEOTIDE SEQUENCE [LARGE SCALE GENOMIC DNA]</scope>
    <source>
        <strain>A1501</strain>
    </source>
</reference>
<protein>
    <recommendedName>
        <fullName evidence="1">Dual-specificity RNA methyltransferase RlmN</fullName>
        <ecNumber evidence="1">2.1.1.192</ecNumber>
    </recommendedName>
    <alternativeName>
        <fullName evidence="1">23S rRNA (adenine(2503)-C(2))-methyltransferase</fullName>
    </alternativeName>
    <alternativeName>
        <fullName evidence="1">23S rRNA m2A2503 methyltransferase</fullName>
    </alternativeName>
    <alternativeName>
        <fullName evidence="1">Ribosomal RNA large subunit methyltransferase N</fullName>
    </alternativeName>
    <alternativeName>
        <fullName evidence="1">tRNA (adenine(37)-C(2))-methyltransferase</fullName>
    </alternativeName>
    <alternativeName>
        <fullName evidence="1">tRNA m2A37 methyltransferase</fullName>
    </alternativeName>
</protein>
<proteinExistence type="inferred from homology"/>
<keyword id="KW-0004">4Fe-4S</keyword>
<keyword id="KW-0963">Cytoplasm</keyword>
<keyword id="KW-1015">Disulfide bond</keyword>
<keyword id="KW-0408">Iron</keyword>
<keyword id="KW-0411">Iron-sulfur</keyword>
<keyword id="KW-0479">Metal-binding</keyword>
<keyword id="KW-0489">Methyltransferase</keyword>
<keyword id="KW-1185">Reference proteome</keyword>
<keyword id="KW-0698">rRNA processing</keyword>
<keyword id="KW-0949">S-adenosyl-L-methionine</keyword>
<keyword id="KW-0808">Transferase</keyword>
<keyword id="KW-0819">tRNA processing</keyword>
<organism>
    <name type="scientific">Stutzerimonas stutzeri (strain A1501)</name>
    <name type="common">Pseudomonas stutzeri</name>
    <dbReference type="NCBI Taxonomy" id="379731"/>
    <lineage>
        <taxon>Bacteria</taxon>
        <taxon>Pseudomonadati</taxon>
        <taxon>Pseudomonadota</taxon>
        <taxon>Gammaproteobacteria</taxon>
        <taxon>Pseudomonadales</taxon>
        <taxon>Pseudomonadaceae</taxon>
        <taxon>Stutzerimonas</taxon>
    </lineage>
</organism>
<name>RLMN_STUS1</name>
<sequence>MIATTGKVNLLGLTQPQLESFFESIGEKRFRAGQVMKWIHHFGVDDFDAMSNLGKALREKLKACAEIRGPEIVSEDISSDGTRKWVVRVASGSCVETVYIPQGGRGTLCVSSQAGCALDCSFCSTGKQGFNSNLTAAEVIGQVWIANKSFGTVPAKIDRAITNVVMMGMGEPLLNFDNVVAAMQIMMDDLGYGISKRKVTLSTSGVVPMIDELAKVIDVSLALSLHAPNEALRDQLVPINKKYPLDVLLAACKRYVSRLGEKRVLTIEYTLLKGVNDQPEHAEQMIALLADIPCKINLIPFNPFPHSGYERPSNNAIRRFQDILHKGGHNVTVRTTRGEDIDAACGQLVGQVLDRTRRSERYIAVRELQSEPGAAQTASNRS</sequence>